<accession>B1K3P2</accession>
<dbReference type="EMBL" id="CP000959">
    <property type="protein sequence ID" value="ACA92763.1"/>
    <property type="molecule type" value="Genomic_DNA"/>
</dbReference>
<dbReference type="RefSeq" id="WP_011548118.1">
    <property type="nucleotide sequence ID" value="NC_010515.1"/>
</dbReference>
<dbReference type="SMR" id="B1K3P2"/>
<dbReference type="GeneID" id="83050387"/>
<dbReference type="KEGG" id="bcm:Bcenmc03_3611"/>
<dbReference type="HOGENOM" id="CLU_064928_1_0_4"/>
<dbReference type="Proteomes" id="UP000002169">
    <property type="component" value="Chromosome 2"/>
</dbReference>
<dbReference type="GO" id="GO:0005886">
    <property type="term" value="C:plasma membrane"/>
    <property type="evidence" value="ECO:0007669"/>
    <property type="project" value="UniProtKB-SubCell"/>
</dbReference>
<dbReference type="GO" id="GO:0051082">
    <property type="term" value="F:unfolded protein binding"/>
    <property type="evidence" value="ECO:0007669"/>
    <property type="project" value="UniProtKB-UniRule"/>
</dbReference>
<dbReference type="GO" id="GO:0016042">
    <property type="term" value="P:lipid catabolic process"/>
    <property type="evidence" value="ECO:0007669"/>
    <property type="project" value="UniProtKB-UniRule"/>
</dbReference>
<dbReference type="GO" id="GO:0006457">
    <property type="term" value="P:protein folding"/>
    <property type="evidence" value="ECO:0007669"/>
    <property type="project" value="UniProtKB-UniRule"/>
</dbReference>
<dbReference type="HAMAP" id="MF_00790">
    <property type="entry name" value="Lipase_chap"/>
    <property type="match status" value="1"/>
</dbReference>
<dbReference type="InterPro" id="IPR004961">
    <property type="entry name" value="Lipase_chaperone"/>
</dbReference>
<dbReference type="NCBIfam" id="NF002333">
    <property type="entry name" value="PRK01294.1-1"/>
    <property type="match status" value="1"/>
</dbReference>
<dbReference type="Pfam" id="PF03280">
    <property type="entry name" value="Lipase_chap"/>
    <property type="match status" value="1"/>
</dbReference>
<dbReference type="SUPFAM" id="SSF158855">
    <property type="entry name" value="Lipase chaperone-like"/>
    <property type="match status" value="1"/>
</dbReference>
<name>LIFO_BURO0</name>
<sequence>MAAREGRAPLARRAAIYGVVGLAAIAGVAMWSGAGPHRGTGAAGDAPDAAAVGGVAAAAPQAAVPASAGLPPSLAGSSAPRLPLDAGGHLAKSRAVRDFFDYCLTARSDLSAAALDALVVREIAAQLDGTVAQVEALDVWHRYRAYLDALATLRDAGAVDKSDLGALQLALDQRASIAYRTLGDWSQPFFGAEQWRQRYDLARLKITQDRSLTDAQKAERLAALQQQMPADERAAQQRVDRQRAAIDQIAQLQKSGATPDAMRAQLTQTLGPEAAARVAQMQQDDASWQSRYADYAAQRAQIESAGLSPQDRDAQIAALRQRVFTKPGEAVRAASLDRGAGSAH</sequence>
<comment type="function">
    <text evidence="1">May be involved in the folding of the extracellular lipase during its passage through the periplasm.</text>
</comment>
<comment type="subcellular location">
    <subcellularLocation>
        <location evidence="1">Cell inner membrane</location>
        <topology evidence="1">Single-pass membrane protein</topology>
    </subcellularLocation>
</comment>
<comment type="similarity">
    <text evidence="1">Belongs to the lipase chaperone family.</text>
</comment>
<feature type="chain" id="PRO_1000190850" description="Lipase chaperone">
    <location>
        <begin position="1"/>
        <end position="344"/>
    </location>
</feature>
<feature type="transmembrane region" description="Helical" evidence="1">
    <location>
        <begin position="14"/>
        <end position="34"/>
    </location>
</feature>
<gene>
    <name evidence="1" type="primary">lifO</name>
    <name type="ordered locus">Bcenmc03_3611</name>
</gene>
<evidence type="ECO:0000255" key="1">
    <source>
        <dbReference type="HAMAP-Rule" id="MF_00790"/>
    </source>
</evidence>
<organism>
    <name type="scientific">Burkholderia orbicola (strain MC0-3)</name>
    <dbReference type="NCBI Taxonomy" id="406425"/>
    <lineage>
        <taxon>Bacteria</taxon>
        <taxon>Pseudomonadati</taxon>
        <taxon>Pseudomonadota</taxon>
        <taxon>Betaproteobacteria</taxon>
        <taxon>Burkholderiales</taxon>
        <taxon>Burkholderiaceae</taxon>
        <taxon>Burkholderia</taxon>
        <taxon>Burkholderia cepacia complex</taxon>
        <taxon>Burkholderia orbicola</taxon>
    </lineage>
</organism>
<reference key="1">
    <citation type="submission" date="2008-02" db="EMBL/GenBank/DDBJ databases">
        <title>Complete sequence of chromosome 2 of Burkholderia cenocepacia MC0-3.</title>
        <authorList>
            <person name="Copeland A."/>
            <person name="Lucas S."/>
            <person name="Lapidus A."/>
            <person name="Barry K."/>
            <person name="Bruce D."/>
            <person name="Goodwin L."/>
            <person name="Glavina del Rio T."/>
            <person name="Dalin E."/>
            <person name="Tice H."/>
            <person name="Pitluck S."/>
            <person name="Chain P."/>
            <person name="Malfatti S."/>
            <person name="Shin M."/>
            <person name="Vergez L."/>
            <person name="Schmutz J."/>
            <person name="Larimer F."/>
            <person name="Land M."/>
            <person name="Hauser L."/>
            <person name="Kyrpides N."/>
            <person name="Mikhailova N."/>
            <person name="Tiedje J."/>
            <person name="Richardson P."/>
        </authorList>
    </citation>
    <scope>NUCLEOTIDE SEQUENCE [LARGE SCALE GENOMIC DNA]</scope>
    <source>
        <strain>MC0-3</strain>
    </source>
</reference>
<keyword id="KW-0997">Cell inner membrane</keyword>
<keyword id="KW-1003">Cell membrane</keyword>
<keyword id="KW-0143">Chaperone</keyword>
<keyword id="KW-0442">Lipid degradation</keyword>
<keyword id="KW-0443">Lipid metabolism</keyword>
<keyword id="KW-0472">Membrane</keyword>
<keyword id="KW-0812">Transmembrane</keyword>
<keyword id="KW-1133">Transmembrane helix</keyword>
<protein>
    <recommendedName>
        <fullName evidence="1">Lipase chaperone</fullName>
    </recommendedName>
    <alternativeName>
        <fullName evidence="1">Lipase activator protein</fullName>
    </alternativeName>
    <alternativeName>
        <fullName evidence="1">Lipase foldase</fullName>
    </alternativeName>
    <alternativeName>
        <fullName evidence="1">Lipase helper protein</fullName>
    </alternativeName>
    <alternativeName>
        <fullName evidence="1">Lipase modulator</fullName>
    </alternativeName>
</protein>
<proteinExistence type="inferred from homology"/>